<organism>
    <name type="scientific">Acinetobacter baylyi (strain ATCC 33305 / BD413 / ADP1)</name>
    <dbReference type="NCBI Taxonomy" id="62977"/>
    <lineage>
        <taxon>Bacteria</taxon>
        <taxon>Pseudomonadati</taxon>
        <taxon>Pseudomonadota</taxon>
        <taxon>Gammaproteobacteria</taxon>
        <taxon>Moraxellales</taxon>
        <taxon>Moraxellaceae</taxon>
        <taxon>Acinetobacter</taxon>
    </lineage>
</organism>
<protein>
    <recommendedName>
        <fullName>Probable electron transfer flavoprotein-ubiquinone oxidoreductase</fullName>
        <shortName>ETF-QO</shortName>
        <shortName>ETF-ubiquinone oxidoreductase</shortName>
        <ecNumber>1.5.5.1</ecNumber>
    </recommendedName>
    <alternativeName>
        <fullName>Electron-transferring-flavoprotein dehydrogenase</fullName>
        <shortName>ETF dehydrogenase</shortName>
    </alternativeName>
</protein>
<comment type="function">
    <text>Accepts electrons from ETF and reduces ubiquinone.</text>
</comment>
<comment type="catalytic activity">
    <reaction>
        <text>a ubiquinone + reduced [electron-transfer flavoprotein] = a ubiquinol + oxidized [electron-transfer flavoprotein] + H(+)</text>
        <dbReference type="Rhea" id="RHEA:24052"/>
        <dbReference type="Rhea" id="RHEA-COMP:9565"/>
        <dbReference type="Rhea" id="RHEA-COMP:9566"/>
        <dbReference type="Rhea" id="RHEA-COMP:10685"/>
        <dbReference type="Rhea" id="RHEA-COMP:10686"/>
        <dbReference type="ChEBI" id="CHEBI:15378"/>
        <dbReference type="ChEBI" id="CHEBI:16389"/>
        <dbReference type="ChEBI" id="CHEBI:17976"/>
        <dbReference type="ChEBI" id="CHEBI:57692"/>
        <dbReference type="ChEBI" id="CHEBI:58307"/>
        <dbReference type="EC" id="1.5.5.1"/>
    </reaction>
</comment>
<comment type="cofactor">
    <cofactor>
        <name>[4Fe-4S] cluster</name>
        <dbReference type="ChEBI" id="CHEBI:49883"/>
    </cofactor>
    <text>Binds 1 [4Fe-4S] cluster.</text>
</comment>
<comment type="cofactor">
    <cofactor>
        <name>FAD</name>
        <dbReference type="ChEBI" id="CHEBI:57692"/>
    </cofactor>
</comment>
<feature type="chain" id="PRO_0000200681" description="Probable electron transfer flavoprotein-ubiquinone oxidoreductase">
    <location>
        <begin position="1"/>
        <end position="570"/>
    </location>
</feature>
<feature type="domain" description="4Fe-4S ferredoxin-type" evidence="2">
    <location>
        <begin position="530"/>
        <end position="559"/>
    </location>
</feature>
<feature type="binding site" evidence="1">
    <location>
        <begin position="13"/>
        <end position="27"/>
    </location>
    <ligand>
        <name>FAD</name>
        <dbReference type="ChEBI" id="CHEBI:57692"/>
    </ligand>
</feature>
<feature type="binding site" evidence="1">
    <location>
        <position position="515"/>
    </location>
    <ligand>
        <name>[4Fe-4S] cluster</name>
        <dbReference type="ChEBI" id="CHEBI:49883"/>
    </ligand>
</feature>
<feature type="binding site" evidence="1">
    <location>
        <position position="539"/>
    </location>
    <ligand>
        <name>[4Fe-4S] cluster</name>
        <dbReference type="ChEBI" id="CHEBI:49883"/>
    </ligand>
</feature>
<feature type="binding site" evidence="1">
    <location>
        <position position="542"/>
    </location>
    <ligand>
        <name>[4Fe-4S] cluster</name>
        <dbReference type="ChEBI" id="CHEBI:49883"/>
    </ligand>
</feature>
<feature type="binding site" evidence="1">
    <location>
        <position position="545"/>
    </location>
    <ligand>
        <name>[4Fe-4S] cluster</name>
        <dbReference type="ChEBI" id="CHEBI:49883"/>
    </ligand>
</feature>
<gene>
    <name type="primary">etfD</name>
    <name type="ordered locus">ACIAD1680</name>
</gene>
<keyword id="KW-0004">4Fe-4S</keyword>
<keyword id="KW-0249">Electron transport</keyword>
<keyword id="KW-0274">FAD</keyword>
<keyword id="KW-0285">Flavoprotein</keyword>
<keyword id="KW-0408">Iron</keyword>
<keyword id="KW-0411">Iron-sulfur</keyword>
<keyword id="KW-0479">Metal-binding</keyword>
<keyword id="KW-0560">Oxidoreductase</keyword>
<keyword id="KW-0813">Transport</keyword>
<keyword id="KW-0830">Ubiquinone</keyword>
<proteinExistence type="predicted"/>
<reference key="1">
    <citation type="journal article" date="1997" name="J. Bacteriol.">
        <title>mucK, a gene in Acinetobacter calcoaceticus ADP1 (BD413), encodes the ability to grow on exogenous cis,cis-muconate as the sole carbon source.</title>
        <authorList>
            <person name="Williams P.A."/>
            <person name="Shaw L.E."/>
        </authorList>
    </citation>
    <scope>NUCLEOTIDE SEQUENCE [GENOMIC DNA]</scope>
</reference>
<reference key="2">
    <citation type="journal article" date="2004" name="Nucleic Acids Res.">
        <title>Unique features revealed by the genome sequence of Acinetobacter sp. ADP1, a versatile and naturally transformation competent bacterium.</title>
        <authorList>
            <person name="Barbe V."/>
            <person name="Vallenet D."/>
            <person name="Fonknechten N."/>
            <person name="Kreimeyer A."/>
            <person name="Oztas S."/>
            <person name="Labarre L."/>
            <person name="Cruveiller S."/>
            <person name="Robert C."/>
            <person name="Duprat S."/>
            <person name="Wincker P."/>
            <person name="Ornston L.N."/>
            <person name="Weissenbach J."/>
            <person name="Marliere P."/>
            <person name="Cohen G.N."/>
            <person name="Medigue C."/>
        </authorList>
    </citation>
    <scope>NUCLEOTIDE SEQUENCE [LARGE SCALE GENOMIC DNA]</scope>
    <source>
        <strain>ATCC 33305 / BD413 / ADP1</strain>
    </source>
</reference>
<accession>P94132</accession>
<sequence>MITIEREAMEFDVVIVGAGPAGLSAAIKIRQLAIENNLPDLSVCVVEKGSEVGAHILSGAVLEPRAINELFPNWKEEGAPLNVPVTEDKTYFLMSDEKSQEAPHWMVPKTMHNDGNYVISLGNVVRWLGQKAEELEVSIFPGFAAAEILYHADGTVKGIQTGDMGIGKDGEPTHNFAPGYELHAKYTLFAEGCRGHLGKRLINKFNLDQDADPQHYGIGIKELWEIDPAKHKPGLVMHGSGWPLSETGSSGGWWLYHAENNQVTLGMIVDLSYENPHMFPFMEMQRWKTHPLIKQYLEGGKRISYGARAVVKGGLNSLPKLTFPGGCLIGDDAGFLNFAKIKGSHTAMKSGMLCGEAVFEAIARGVDKGGDLAIARVVEGEDLFDKELTTYTQKFDKSWLKEELHRSRNFGPAMHKFGLWIGGAFNFVDQNIFKVPFTLHDLQPDYSALKTQDQATFKPNYPKPDGKLTFDRLSSVFVSNTVHEENQPSHLKLTDASIPVAVNLPRWDEPAQRYCPAGVYEIVDEGEGNKRFQINAANCVHCKTCDIKDPSQNITWVTPEGGGGPNYPNM</sequence>
<name>ETFD_ACIAD</name>
<evidence type="ECO:0000255" key="1"/>
<evidence type="ECO:0000255" key="2">
    <source>
        <dbReference type="PROSITE-ProRule" id="PRU00711"/>
    </source>
</evidence>
<dbReference type="EC" id="1.5.5.1"/>
<dbReference type="EMBL" id="U87258">
    <property type="protein sequence ID" value="AAC27118.1"/>
    <property type="molecule type" value="Genomic_DNA"/>
</dbReference>
<dbReference type="EMBL" id="CR543861">
    <property type="protein sequence ID" value="CAG68525.1"/>
    <property type="molecule type" value="Genomic_DNA"/>
</dbReference>
<dbReference type="RefSeq" id="WP_004926550.1">
    <property type="nucleotide sequence ID" value="NC_005966.1"/>
</dbReference>
<dbReference type="SMR" id="P94132"/>
<dbReference type="STRING" id="202950.GCA_001485005_02112"/>
<dbReference type="GeneID" id="45234070"/>
<dbReference type="KEGG" id="aci:ACIAD1680"/>
<dbReference type="eggNOG" id="COG0644">
    <property type="taxonomic scope" value="Bacteria"/>
</dbReference>
<dbReference type="eggNOG" id="COG2440">
    <property type="taxonomic scope" value="Bacteria"/>
</dbReference>
<dbReference type="HOGENOM" id="CLU_009667_4_1_6"/>
<dbReference type="OrthoDB" id="9766632at2"/>
<dbReference type="BioCyc" id="ASP62977:ACIAD_RS07745-MONOMER"/>
<dbReference type="Proteomes" id="UP000000430">
    <property type="component" value="Chromosome"/>
</dbReference>
<dbReference type="GO" id="GO:0051539">
    <property type="term" value="F:4 iron, 4 sulfur cluster binding"/>
    <property type="evidence" value="ECO:0007669"/>
    <property type="project" value="UniProtKB-KW"/>
</dbReference>
<dbReference type="GO" id="GO:0004174">
    <property type="term" value="F:electron-transferring-flavoprotein dehydrogenase activity"/>
    <property type="evidence" value="ECO:0007669"/>
    <property type="project" value="UniProtKB-EC"/>
</dbReference>
<dbReference type="GO" id="GO:0046872">
    <property type="term" value="F:metal ion binding"/>
    <property type="evidence" value="ECO:0007669"/>
    <property type="project" value="UniProtKB-KW"/>
</dbReference>
<dbReference type="FunFam" id="3.30.70.20:FF:000012">
    <property type="entry name" value="Electron transfer flavoprotein-ubiquinone oxidoreductase, mitochondrial"/>
    <property type="match status" value="1"/>
</dbReference>
<dbReference type="Gene3D" id="3.30.70.20">
    <property type="match status" value="1"/>
</dbReference>
<dbReference type="Gene3D" id="3.30.9.90">
    <property type="match status" value="1"/>
</dbReference>
<dbReference type="Gene3D" id="3.50.50.60">
    <property type="entry name" value="FAD/NAD(P)-binding domain"/>
    <property type="match status" value="1"/>
</dbReference>
<dbReference type="InterPro" id="IPR017896">
    <property type="entry name" value="4Fe4S_Fe-S-bd"/>
</dbReference>
<dbReference type="InterPro" id="IPR040156">
    <property type="entry name" value="ETF-QO"/>
</dbReference>
<dbReference type="InterPro" id="IPR049398">
    <property type="entry name" value="ETF-QO/FixC_UQ-bd"/>
</dbReference>
<dbReference type="InterPro" id="IPR007859">
    <property type="entry name" value="ETF-QO/FixX_C"/>
</dbReference>
<dbReference type="InterPro" id="IPR036188">
    <property type="entry name" value="FAD/NAD-bd_sf"/>
</dbReference>
<dbReference type="PANTHER" id="PTHR10617">
    <property type="entry name" value="ELECTRON TRANSFER FLAVOPROTEIN-UBIQUINONE OXIDOREDUCTASE"/>
    <property type="match status" value="1"/>
</dbReference>
<dbReference type="PANTHER" id="PTHR10617:SF107">
    <property type="entry name" value="ELECTRON TRANSFER FLAVOPROTEIN-UBIQUINONE OXIDOREDUCTASE, MITOCHONDRIAL"/>
    <property type="match status" value="1"/>
</dbReference>
<dbReference type="Pfam" id="PF21162">
    <property type="entry name" value="ETFQO_UQ-bd"/>
    <property type="match status" value="1"/>
</dbReference>
<dbReference type="Pfam" id="PF05187">
    <property type="entry name" value="Fer4_ETF_QO"/>
    <property type="match status" value="1"/>
</dbReference>
<dbReference type="Pfam" id="PF01946">
    <property type="entry name" value="Thi4"/>
    <property type="match status" value="1"/>
</dbReference>
<dbReference type="PRINTS" id="PR00420">
    <property type="entry name" value="RNGMNOXGNASE"/>
</dbReference>
<dbReference type="SUPFAM" id="SSF54862">
    <property type="entry name" value="4Fe-4S ferredoxins"/>
    <property type="match status" value="1"/>
</dbReference>
<dbReference type="SUPFAM" id="SSF54373">
    <property type="entry name" value="FAD-linked reductases, C-terminal domain"/>
    <property type="match status" value="1"/>
</dbReference>
<dbReference type="SUPFAM" id="SSF51905">
    <property type="entry name" value="FAD/NAD(P)-binding domain"/>
    <property type="match status" value="1"/>
</dbReference>
<dbReference type="PROSITE" id="PS51379">
    <property type="entry name" value="4FE4S_FER_2"/>
    <property type="match status" value="1"/>
</dbReference>